<keyword id="KW-1035">Host cytoplasm</keyword>
<keyword id="KW-1040">Host Golgi apparatus</keyword>
<keyword id="KW-1048">Host nucleus</keyword>
<keyword id="KW-1185">Reference proteome</keyword>
<keyword id="KW-0946">Virion</keyword>
<keyword id="KW-0920">Virion tegument</keyword>
<organism>
    <name type="scientific">Equine herpesvirus 2 (strain 86/87)</name>
    <name type="common">EHV-2</name>
    <dbReference type="NCBI Taxonomy" id="82831"/>
    <lineage>
        <taxon>Viruses</taxon>
        <taxon>Duplodnaviria</taxon>
        <taxon>Heunggongvirae</taxon>
        <taxon>Peploviricota</taxon>
        <taxon>Herviviricetes</taxon>
        <taxon>Herpesvirales</taxon>
        <taxon>Orthoherpesviridae</taxon>
        <taxon>Gammaherpesvirinae</taxon>
        <taxon>Percavirus</taxon>
        <taxon>Percavirus equidgamma2</taxon>
        <taxon>Equid gammaherpesvirus 2</taxon>
    </lineage>
</organism>
<sequence length="965" mass="106096">MNPQASLDRLAQRLSDAENLFKKVRVLVDLESAPLSLRSLSDPVRIASFLNTLSDRGNEYLAFIRHRPAFYLLRVASFGEQVPLGAGDLQGAVGLLTSAVRAFKDLKPPPEGTPAPANNLLENSNILTRLSQFIAHLRSLDLSQPVTFTPPASLVTLRCIEEITFSFWHAHWTAPPEVSLPKPNPQSKLERWLALSYAAALGAARDNAPKHRRELRALAKSLLTTERDLFAPVSVVTETSLTLPLAKERAREIFSMVDDALPGDAAARGAPVLGFRDADLNAASPEYVFLYEHVFEALLHDQTYGCARRTVEAFLERCLKFLVNLGSYVQTACSNKSHLSPPEIEGVRAAFHACGLTREACHTFSTMLAIAPAGGAASRLKHLHATVQHLEQITVFGRHFYECLRRCSPTSISHRLVREVLRTAQVEQNSATPWTAGAAEGSALGWPVHSYLRIFLPRPPEDDLAATFKAASESNFMKSLIGVSVKRDWDLNKFYVLSKKAPGGGGNGEGGSGGGNGGAGTVSRKQVRKFCEGLNPGDADYALEVVQSKYFAPEFARAVLLPELEAMLRGRVRRHVMLFRLRWLVLFAFEDAAGLAHIRRPLTLAYFQLTEIFGQGGVGSGAGAAGGGDGGALGNLLDHFHEAWTAARELVPEAGGEVPHELLTNIYRSLHAPAAREQLAAAAAFLKEIKPLVEGTWNMMRIASVLCHARYNYLSASGHLRVPFGEKPGYVDVPVPVFKETVKIMESSLHETLVILSQACQDLQRFYAACLGILDQNQFLATHPVQLDLSEPDFQAVKETLLGCLRRYREVASLAAGSCCFSLTRHFGALFDPPLITEAVVRKVLEFSEERDTTDAFIESLQQPIAKVEEEDWDDAPPKHALNDYDLTALREINESFPLPKQHGNNPPETTPSIKLSYTDSVNVSQITLDWEKFLRTSYIPQDAITSEFSHITVKKLEQSITGSF</sequence>
<proteinExistence type="inferred from homology"/>
<evidence type="ECO:0000255" key="1">
    <source>
        <dbReference type="HAMAP-Rule" id="MF_04043"/>
    </source>
</evidence>
<feature type="chain" id="PRO_0000406040" description="Inner tegument protein">
    <location>
        <begin position="1"/>
        <end position="965"/>
    </location>
</feature>
<feature type="region of interest" description="Interaction with large tegument protein" evidence="1">
    <location>
        <begin position="489"/>
        <end position="965"/>
    </location>
</feature>
<organismHost>
    <name type="scientific">Equus caballus</name>
    <name type="common">Horse</name>
    <dbReference type="NCBI Taxonomy" id="9796"/>
</organismHost>
<protein>
    <recommendedName>
        <fullName evidence="1">Inner tegument protein</fullName>
    </recommendedName>
</protein>
<name>ITP_EHV2</name>
<accession>Q66665</accession>
<gene>
    <name type="primary">63</name>
</gene>
<comment type="function">
    <text evidence="1">Plays an essential role in cytoplasmic secondary envelopment during viral egress. Interacts with the capsid via the large tegument protein/LTP and participates in its transport to the host trans-Golgi network (TGN) where secondary envelopment occurs. Modulates tegumentation and capsid accumulation at the viral assembly complex.</text>
</comment>
<comment type="subunit">
    <text evidence="1">Interacts (via C-terminus) with the large tegument protein/LTP (via N-terminus).</text>
</comment>
<comment type="subcellular location">
    <subcellularLocation>
        <location evidence="1">Virion tegument</location>
    </subcellularLocation>
    <subcellularLocation>
        <location evidence="1">Host cytoplasm</location>
    </subcellularLocation>
    <subcellularLocation>
        <location evidence="1">Host nucleus</location>
    </subcellularLocation>
    <subcellularLocation>
        <location evidence="1">Host Golgi apparatus</location>
        <location evidence="1">Host trans-Golgi network</location>
    </subcellularLocation>
</comment>
<comment type="similarity">
    <text evidence="1">Belongs to the herpesviridae inner tegument protein family.</text>
</comment>
<reference key="1">
    <citation type="journal article" date="1995" name="J. Mol. Biol.">
        <title>The DNA sequence of equine herpesvirus 2.</title>
        <authorList>
            <person name="Telford E.A.R."/>
            <person name="Watson M.S."/>
            <person name="Aird H.C."/>
            <person name="Perry J."/>
            <person name="Davison A.J."/>
        </authorList>
    </citation>
    <scope>NUCLEOTIDE SEQUENCE [LARGE SCALE GENOMIC DNA]</scope>
</reference>
<dbReference type="EMBL" id="U20824">
    <property type="protein sequence ID" value="AAC13851.1"/>
    <property type="molecule type" value="Genomic_DNA"/>
</dbReference>
<dbReference type="PIR" id="S55658">
    <property type="entry name" value="S55658"/>
</dbReference>
<dbReference type="KEGG" id="vg:1461054"/>
<dbReference type="Proteomes" id="UP000007083">
    <property type="component" value="Segment"/>
</dbReference>
<dbReference type="GO" id="GO:0044177">
    <property type="term" value="C:host cell Golgi apparatus"/>
    <property type="evidence" value="ECO:0007669"/>
    <property type="project" value="UniProtKB-SubCell"/>
</dbReference>
<dbReference type="GO" id="GO:0042025">
    <property type="term" value="C:host cell nucleus"/>
    <property type="evidence" value="ECO:0007669"/>
    <property type="project" value="UniProtKB-SubCell"/>
</dbReference>
<dbReference type="GO" id="GO:0019033">
    <property type="term" value="C:viral tegument"/>
    <property type="evidence" value="ECO:0007669"/>
    <property type="project" value="UniProtKB-SubCell"/>
</dbReference>
<dbReference type="GO" id="GO:0019068">
    <property type="term" value="P:virion assembly"/>
    <property type="evidence" value="ECO:0007669"/>
    <property type="project" value="InterPro"/>
</dbReference>
<dbReference type="HAMAP" id="MF_04043">
    <property type="entry name" value="HSV_ITP"/>
    <property type="match status" value="1"/>
</dbReference>
<dbReference type="InterPro" id="IPR007611">
    <property type="entry name" value="Herpes_U30"/>
</dbReference>
<dbReference type="InterPro" id="IPR034738">
    <property type="entry name" value="HSV_ITP"/>
</dbReference>
<dbReference type="Pfam" id="PF04523">
    <property type="entry name" value="Herpes_U30"/>
    <property type="match status" value="1"/>
</dbReference>